<feature type="chain" id="PRO_0000180140" description="Acyl carrier protein">
    <location>
        <begin position="1"/>
        <end position="77"/>
    </location>
</feature>
<feature type="domain" description="Carrier" evidence="2">
    <location>
        <begin position="2"/>
        <end position="77"/>
    </location>
</feature>
<feature type="modified residue" description="O-(pantetheine 4'-phosphoryl)serine" evidence="2">
    <location>
        <position position="37"/>
    </location>
</feature>
<reference key="1">
    <citation type="journal article" date="2003" name="Science">
        <title>Genome of Geobacter sulfurreducens: metal reduction in subsurface environments.</title>
        <authorList>
            <person name="Methe B.A."/>
            <person name="Nelson K.E."/>
            <person name="Eisen J.A."/>
            <person name="Paulsen I.T."/>
            <person name="Nelson W.C."/>
            <person name="Heidelberg J.F."/>
            <person name="Wu D."/>
            <person name="Wu M."/>
            <person name="Ward N.L."/>
            <person name="Beanan M.J."/>
            <person name="Dodson R.J."/>
            <person name="Madupu R."/>
            <person name="Brinkac L.M."/>
            <person name="Daugherty S.C."/>
            <person name="DeBoy R.T."/>
            <person name="Durkin A.S."/>
            <person name="Gwinn M.L."/>
            <person name="Kolonay J.F."/>
            <person name="Sullivan S.A."/>
            <person name="Haft D.H."/>
            <person name="Selengut J."/>
            <person name="Davidsen T.M."/>
            <person name="Zafar N."/>
            <person name="White O."/>
            <person name="Tran B."/>
            <person name="Romero C."/>
            <person name="Forberger H.A."/>
            <person name="Weidman J.F."/>
            <person name="Khouri H.M."/>
            <person name="Feldblyum T.V."/>
            <person name="Utterback T.R."/>
            <person name="Van Aken S.E."/>
            <person name="Lovley D.R."/>
            <person name="Fraser C.M."/>
        </authorList>
    </citation>
    <scope>NUCLEOTIDE SEQUENCE [LARGE SCALE GENOMIC DNA]</scope>
    <source>
        <strain>ATCC 51573 / DSM 12127 / PCA</strain>
    </source>
</reference>
<accession>Q74CR8</accession>
<protein>
    <recommendedName>
        <fullName evidence="1">Acyl carrier protein</fullName>
        <shortName evidence="1">ACP</shortName>
    </recommendedName>
</protein>
<sequence length="77" mass="8606">MSSIEKRVKEIVAEQLGVDEAQVTNDASFMDDLGADSLDTVELVMALEEEFDIEISDEDAEKIQNVQDAIDYITEHT</sequence>
<comment type="function">
    <text evidence="1">Carrier of the growing fatty acid chain in fatty acid biosynthesis.</text>
</comment>
<comment type="pathway">
    <text evidence="1">Lipid metabolism; fatty acid biosynthesis.</text>
</comment>
<comment type="subcellular location">
    <subcellularLocation>
        <location evidence="1">Cytoplasm</location>
    </subcellularLocation>
</comment>
<comment type="PTM">
    <text evidence="1">4'-phosphopantetheine is transferred from CoA to a specific serine of apo-ACP by AcpS. This modification is essential for activity because fatty acids are bound in thioester linkage to the sulfhydryl of the prosthetic group.</text>
</comment>
<comment type="similarity">
    <text evidence="1">Belongs to the acyl carrier protein (ACP) family.</text>
</comment>
<organism>
    <name type="scientific">Geobacter sulfurreducens (strain ATCC 51573 / DSM 12127 / PCA)</name>
    <dbReference type="NCBI Taxonomy" id="243231"/>
    <lineage>
        <taxon>Bacteria</taxon>
        <taxon>Pseudomonadati</taxon>
        <taxon>Thermodesulfobacteriota</taxon>
        <taxon>Desulfuromonadia</taxon>
        <taxon>Geobacterales</taxon>
        <taxon>Geobacteraceae</taxon>
        <taxon>Geobacter</taxon>
    </lineage>
</organism>
<evidence type="ECO:0000255" key="1">
    <source>
        <dbReference type="HAMAP-Rule" id="MF_01217"/>
    </source>
</evidence>
<evidence type="ECO:0000255" key="2">
    <source>
        <dbReference type="PROSITE-ProRule" id="PRU00258"/>
    </source>
</evidence>
<gene>
    <name evidence="1" type="primary">acpP</name>
    <name type="ordered locus">GSU1604</name>
</gene>
<proteinExistence type="inferred from homology"/>
<name>ACP_GEOSL</name>
<keyword id="KW-0963">Cytoplasm</keyword>
<keyword id="KW-0275">Fatty acid biosynthesis</keyword>
<keyword id="KW-0276">Fatty acid metabolism</keyword>
<keyword id="KW-0444">Lipid biosynthesis</keyword>
<keyword id="KW-0443">Lipid metabolism</keyword>
<keyword id="KW-0596">Phosphopantetheine</keyword>
<keyword id="KW-0597">Phosphoprotein</keyword>
<keyword id="KW-1185">Reference proteome</keyword>
<dbReference type="EMBL" id="AE017180">
    <property type="protein sequence ID" value="AAR34978.1"/>
    <property type="molecule type" value="Genomic_DNA"/>
</dbReference>
<dbReference type="RefSeq" id="NP_952655.1">
    <property type="nucleotide sequence ID" value="NC_002939.5"/>
</dbReference>
<dbReference type="RefSeq" id="WP_010942249.1">
    <property type="nucleotide sequence ID" value="NC_002939.5"/>
</dbReference>
<dbReference type="SMR" id="Q74CR8"/>
<dbReference type="FunCoup" id="Q74CR8">
    <property type="interactions" value="552"/>
</dbReference>
<dbReference type="STRING" id="243231.GSU1604"/>
<dbReference type="EnsemblBacteria" id="AAR34978">
    <property type="protein sequence ID" value="AAR34978"/>
    <property type="gene ID" value="GSU1604"/>
</dbReference>
<dbReference type="KEGG" id="gsu:GSU1604"/>
<dbReference type="PATRIC" id="fig|243231.5.peg.1646"/>
<dbReference type="eggNOG" id="COG0236">
    <property type="taxonomic scope" value="Bacteria"/>
</dbReference>
<dbReference type="HOGENOM" id="CLU_108696_5_1_7"/>
<dbReference type="InParanoid" id="Q74CR8"/>
<dbReference type="OrthoDB" id="9804551at2"/>
<dbReference type="UniPathway" id="UPA00094"/>
<dbReference type="Proteomes" id="UP000000577">
    <property type="component" value="Chromosome"/>
</dbReference>
<dbReference type="GO" id="GO:0005829">
    <property type="term" value="C:cytosol"/>
    <property type="evidence" value="ECO:0000318"/>
    <property type="project" value="GO_Central"/>
</dbReference>
<dbReference type="GO" id="GO:0016020">
    <property type="term" value="C:membrane"/>
    <property type="evidence" value="ECO:0007669"/>
    <property type="project" value="GOC"/>
</dbReference>
<dbReference type="GO" id="GO:0000035">
    <property type="term" value="F:acyl binding"/>
    <property type="evidence" value="ECO:0000318"/>
    <property type="project" value="GO_Central"/>
</dbReference>
<dbReference type="GO" id="GO:0000036">
    <property type="term" value="F:acyl carrier activity"/>
    <property type="evidence" value="ECO:0000318"/>
    <property type="project" value="GO_Central"/>
</dbReference>
<dbReference type="GO" id="GO:0009245">
    <property type="term" value="P:lipid A biosynthetic process"/>
    <property type="evidence" value="ECO:0000318"/>
    <property type="project" value="GO_Central"/>
</dbReference>
<dbReference type="FunFam" id="1.10.1200.10:FF:000001">
    <property type="entry name" value="Acyl carrier protein"/>
    <property type="match status" value="1"/>
</dbReference>
<dbReference type="Gene3D" id="1.10.1200.10">
    <property type="entry name" value="ACP-like"/>
    <property type="match status" value="1"/>
</dbReference>
<dbReference type="HAMAP" id="MF_01217">
    <property type="entry name" value="Acyl_carrier"/>
    <property type="match status" value="1"/>
</dbReference>
<dbReference type="InterPro" id="IPR003231">
    <property type="entry name" value="ACP"/>
</dbReference>
<dbReference type="InterPro" id="IPR036736">
    <property type="entry name" value="ACP-like_sf"/>
</dbReference>
<dbReference type="InterPro" id="IPR009081">
    <property type="entry name" value="PP-bd_ACP"/>
</dbReference>
<dbReference type="InterPro" id="IPR006162">
    <property type="entry name" value="Ppantetheine_attach_site"/>
</dbReference>
<dbReference type="NCBIfam" id="TIGR00517">
    <property type="entry name" value="acyl_carrier"/>
    <property type="match status" value="1"/>
</dbReference>
<dbReference type="NCBIfam" id="NF002148">
    <property type="entry name" value="PRK00982.1-2"/>
    <property type="match status" value="1"/>
</dbReference>
<dbReference type="NCBIfam" id="NF002149">
    <property type="entry name" value="PRK00982.1-3"/>
    <property type="match status" value="1"/>
</dbReference>
<dbReference type="NCBIfam" id="NF002150">
    <property type="entry name" value="PRK00982.1-4"/>
    <property type="match status" value="1"/>
</dbReference>
<dbReference type="NCBIfam" id="NF002151">
    <property type="entry name" value="PRK00982.1-5"/>
    <property type="match status" value="1"/>
</dbReference>
<dbReference type="PANTHER" id="PTHR20863">
    <property type="entry name" value="ACYL CARRIER PROTEIN"/>
    <property type="match status" value="1"/>
</dbReference>
<dbReference type="PANTHER" id="PTHR20863:SF76">
    <property type="entry name" value="CARRIER DOMAIN-CONTAINING PROTEIN"/>
    <property type="match status" value="1"/>
</dbReference>
<dbReference type="Pfam" id="PF00550">
    <property type="entry name" value="PP-binding"/>
    <property type="match status" value="1"/>
</dbReference>
<dbReference type="SUPFAM" id="SSF47336">
    <property type="entry name" value="ACP-like"/>
    <property type="match status" value="1"/>
</dbReference>
<dbReference type="PROSITE" id="PS50075">
    <property type="entry name" value="CARRIER"/>
    <property type="match status" value="1"/>
</dbReference>
<dbReference type="PROSITE" id="PS00012">
    <property type="entry name" value="PHOSPHOPANTETHEINE"/>
    <property type="match status" value="1"/>
</dbReference>